<protein>
    <recommendedName>
        <fullName>ATP synthase protein I</fullName>
    </recommendedName>
</protein>
<evidence type="ECO:0000255" key="1"/>
<evidence type="ECO:0000269" key="2">
    <source>
    </source>
</evidence>
<evidence type="ECO:0000305" key="3"/>
<comment type="function">
    <text>A possible function for this protein is to guide the assembly of the membrane sector of the ATPase enzyme complex.</text>
</comment>
<comment type="subcellular location">
    <subcellularLocation>
        <location>Cell inner membrane</location>
        <topology>Multi-pass membrane protein</topology>
    </subcellularLocation>
</comment>
<comment type="similarity">
    <text evidence="3">Belongs to the bacterial AtpI family.</text>
</comment>
<comment type="sequence caution" evidence="3">
    <conflict type="erroneous initiation">
        <sequence resource="EMBL-CDS" id="AAA24730"/>
    </conflict>
    <text>Extended N-terminus.</text>
</comment>
<comment type="sequence caution" evidence="3">
    <conflict type="erroneous initiation">
        <sequence resource="EMBL-CDS" id="AAA62091"/>
    </conflict>
    <text>Extended N-terminus.</text>
</comment>
<comment type="sequence caution" evidence="3">
    <conflict type="erroneous initiation">
        <sequence resource="EMBL-CDS" id="AAA83868"/>
    </conflict>
    <text>Extended N-terminus.</text>
</comment>
<comment type="sequence caution" evidence="3">
    <conflict type="erroneous initiation">
        <sequence resource="EMBL-CDS" id="CAA23513"/>
    </conflict>
    <text>Extended N-terminus.</text>
</comment>
<comment type="sequence caution" evidence="3">
    <conflict type="erroneous initiation">
        <sequence resource="EMBL-CDS" id="CAA25640"/>
    </conflict>
    <text>Extended N-terminus.</text>
</comment>
<comment type="sequence caution" evidence="3">
    <conflict type="erroneous initiation">
        <sequence resource="EMBL-CDS" id="CAA25775"/>
    </conflict>
    <text>Extended N-terminus.</text>
</comment>
<accession>P0ABC0</accession>
<accession>P03808</accession>
<accession>P76747</accession>
<accession>Q2M857</accession>
<accession>Q47248</accession>
<reference key="1">
    <citation type="journal article" date="1984" name="Biochem. J.">
        <title>DNA sequence around the Escherichia coli unc operon. Completion of the sequence of a 17 kilobase segment containing asnA, oriC, unc, glmS and phoS.</title>
        <authorList>
            <person name="Walker J.E."/>
            <person name="Gay N.J."/>
            <person name="Saraste M."/>
            <person name="Eberle A.N."/>
        </authorList>
    </citation>
    <scope>NUCLEOTIDE SEQUENCE [GENOMIC DNA]</scope>
</reference>
<reference key="2">
    <citation type="journal article" date="1981" name="Nucleic Acids Res.">
        <title>The atp operon: nucleotide sequence of the promoter and the genes for the membrane proteins, and the delta subunit of Escherichia coli ATP-synthase.</title>
        <authorList>
            <person name="Gay N.J."/>
            <person name="Walker J.E."/>
        </authorList>
    </citation>
    <scope>NUCLEOTIDE SEQUENCE [GENOMIC DNA]</scope>
</reference>
<reference key="3">
    <citation type="journal article" date="1984" name="Biochim. Biophys. Acta">
        <title>The unc operon. Nucleotide sequence, regulation and structure of ATP-synthase.</title>
        <authorList>
            <person name="Walker J.E."/>
            <person name="Saraste M."/>
            <person name="Gay N.J."/>
        </authorList>
    </citation>
    <scope>NUCLEOTIDE SEQUENCE [GENOMIC DNA]</scope>
</reference>
<reference key="4">
    <citation type="journal article" date="1984" name="Mol. Gen. Genet.">
        <title>The promoters of the atp operon of Escherichia coli K12.</title>
        <authorList>
            <person name="Nielsen J."/>
            <person name="Joergensen B.B."/>
            <person name="von Meyenburg K."/>
            <person name="Hansen F.G."/>
        </authorList>
    </citation>
    <scope>NUCLEOTIDE SEQUENCE [GENOMIC DNA]</scope>
    <source>
        <strain>K12</strain>
    </source>
</reference>
<reference key="5">
    <citation type="journal article" date="1982" name="Ann. N. Y. Acad. Sci.">
        <title>Structure and function of H+-ATPase: what we have learned from Escherichia coli H+-ATPase.</title>
        <authorList>
            <person name="Kanazawa H."/>
            <person name="Futai M."/>
        </authorList>
    </citation>
    <scope>NUCLEOTIDE SEQUENCE [GENOMIC DNA]</scope>
</reference>
<reference key="6">
    <citation type="journal article" date="1993" name="Genomics">
        <title>DNA sequence and analysis of 136 kilobases of the Escherichia coli genome: organizational symmetry around the origin of replication.</title>
        <authorList>
            <person name="Burland V.D."/>
            <person name="Plunkett G. III"/>
            <person name="Daniels D.L."/>
            <person name="Blattner F.R."/>
        </authorList>
    </citation>
    <scope>NUCLEOTIDE SEQUENCE [LARGE SCALE GENOMIC DNA]</scope>
    <source>
        <strain>K12 / MG1655 / ATCC 47076</strain>
    </source>
</reference>
<reference key="7">
    <citation type="journal article" date="1997" name="Science">
        <title>The complete genome sequence of Escherichia coli K-12.</title>
        <authorList>
            <person name="Blattner F.R."/>
            <person name="Plunkett G. III"/>
            <person name="Bloch C.A."/>
            <person name="Perna N.T."/>
            <person name="Burland V."/>
            <person name="Riley M."/>
            <person name="Collado-Vides J."/>
            <person name="Glasner J.D."/>
            <person name="Rode C.K."/>
            <person name="Mayhew G.F."/>
            <person name="Gregor J."/>
            <person name="Davis N.W."/>
            <person name="Kirkpatrick H.A."/>
            <person name="Goeden M.A."/>
            <person name="Rose D.J."/>
            <person name="Mau B."/>
            <person name="Shao Y."/>
        </authorList>
    </citation>
    <scope>NUCLEOTIDE SEQUENCE [LARGE SCALE GENOMIC DNA]</scope>
    <source>
        <strain>K12 / MG1655 / ATCC 47076</strain>
    </source>
</reference>
<reference key="8">
    <citation type="journal article" date="2006" name="Mol. Syst. Biol.">
        <title>Highly accurate genome sequences of Escherichia coli K-12 strains MG1655 and W3110.</title>
        <authorList>
            <person name="Hayashi K."/>
            <person name="Morooka N."/>
            <person name="Yamamoto Y."/>
            <person name="Fujita K."/>
            <person name="Isono K."/>
            <person name="Choi S."/>
            <person name="Ohtsubo E."/>
            <person name="Baba T."/>
            <person name="Wanner B.L."/>
            <person name="Mori H."/>
            <person name="Horiuchi T."/>
        </authorList>
    </citation>
    <scope>NUCLEOTIDE SEQUENCE [LARGE SCALE GENOMIC DNA]</scope>
    <source>
        <strain>K12 / W3110 / ATCC 27325 / DSM 5911</strain>
    </source>
</reference>
<reference key="9">
    <citation type="journal article" date="1984" name="J. Bacteriol.">
        <title>Construction and characterization of an Escherichia coli strain with a uncI mutation.</title>
        <authorList>
            <person name="Gay N.J."/>
        </authorList>
    </citation>
    <scope>NUCLEOTIDE SEQUENCE [GENOMIC DNA] OF 1-108</scope>
</reference>
<reference key="10">
    <citation type="journal article" date="1982" name="Biochem. Biophys. Res. Commun.">
        <title>Nucleotide sequence of the promoter region of the gene cluster for proton-translocating ATPase from Escherichia coli and identification of the active promotor.</title>
        <authorList>
            <person name="Kanazawa H."/>
            <person name="Mabuchi K."/>
            <person name="Futai M."/>
        </authorList>
    </citation>
    <scope>NUCLEOTIDE SEQUENCE [GENOMIC DNA] OF 1-80</scope>
</reference>
<reference key="11">
    <citation type="journal article" date="1981" name="Mol. Gen. Genet.">
        <title>The nucleotide sequence of the atp genes coding for the F0 subunits a, b, c and the F1 subunit delta of the membrane bound ATP synthase of Escherichia coli.</title>
        <authorList>
            <person name="Nielsen J."/>
            <person name="Hansen F.G."/>
            <person name="Hoppe J."/>
            <person name="Friedl P."/>
            <person name="von Meyenburg K."/>
        </authorList>
    </citation>
    <scope>NUCLEOTIDE SEQUENCE [GENOMIC DNA] OF 60-126</scope>
</reference>
<reference key="12">
    <citation type="journal article" date="1990" name="J. Biol. Chem.">
        <title>Overproduction and purification of the uncI gene product of the ATP synthase of Escherichia coli.</title>
        <authorList>
            <person name="Schneppe B."/>
            <person name="Deckers-Hebesteit G."/>
            <person name="Altendorf K."/>
        </authorList>
    </citation>
    <scope>PROTEIN SEQUENCE OF 2-8</scope>
</reference>
<reference key="13">
    <citation type="journal article" date="2005" name="Science">
        <title>Global topology analysis of the Escherichia coli inner membrane proteome.</title>
        <authorList>
            <person name="Daley D.O."/>
            <person name="Rapp M."/>
            <person name="Granseth E."/>
            <person name="Melen K."/>
            <person name="Drew D."/>
            <person name="von Heijne G."/>
        </authorList>
    </citation>
    <scope>TOPOLOGY [LARGE SCALE ANALYSIS]</scope>
    <source>
        <strain>K12 / MG1655 / ATCC 47076</strain>
    </source>
</reference>
<name>ATPZ_ECOLI</name>
<dbReference type="EMBL" id="X01631">
    <property type="protein sequence ID" value="CAA25775.1"/>
    <property type="status" value="ALT_INIT"/>
    <property type="molecule type" value="Genomic_DNA"/>
</dbReference>
<dbReference type="EMBL" id="X01383">
    <property type="protein sequence ID" value="CAA25640.1"/>
    <property type="status" value="ALT_INIT"/>
    <property type="molecule type" value="Genomic_DNA"/>
</dbReference>
<dbReference type="EMBL" id="V00264">
    <property type="protein sequence ID" value="CAA23513.1"/>
    <property type="status" value="ALT_INIT"/>
    <property type="molecule type" value="Genomic_DNA"/>
</dbReference>
<dbReference type="EMBL" id="J01594">
    <property type="protein sequence ID" value="AAA24730.1"/>
    <property type="status" value="ALT_INIT"/>
    <property type="molecule type" value="Genomic_DNA"/>
</dbReference>
<dbReference type="EMBL" id="M25464">
    <property type="protein sequence ID" value="AAA83868.1"/>
    <property type="status" value="ALT_INIT"/>
    <property type="molecule type" value="Genomic_DNA"/>
</dbReference>
<dbReference type="EMBL" id="L10328">
    <property type="protein sequence ID" value="AAA62091.1"/>
    <property type="status" value="ALT_INIT"/>
    <property type="molecule type" value="Genomic_DNA"/>
</dbReference>
<dbReference type="EMBL" id="U00096">
    <property type="protein sequence ID" value="AAC76762.2"/>
    <property type="molecule type" value="Genomic_DNA"/>
</dbReference>
<dbReference type="EMBL" id="AP009048">
    <property type="protein sequence ID" value="BAE77549.1"/>
    <property type="molecule type" value="Genomic_DNA"/>
</dbReference>
<dbReference type="RefSeq" id="NP_418195.2">
    <property type="nucleotide sequence ID" value="NC_000913.3"/>
</dbReference>
<dbReference type="RefSeq" id="WP_000116695.1">
    <property type="nucleotide sequence ID" value="NZ_SSZK01000036.1"/>
</dbReference>
<dbReference type="SMR" id="P0ABC0"/>
<dbReference type="BioGRID" id="4259565">
    <property type="interactions" value="5"/>
</dbReference>
<dbReference type="FunCoup" id="P0ABC0">
    <property type="interactions" value="53"/>
</dbReference>
<dbReference type="STRING" id="511145.b3739"/>
<dbReference type="PaxDb" id="511145-b3739"/>
<dbReference type="EnsemblBacteria" id="AAC76762">
    <property type="protein sequence ID" value="AAC76762"/>
    <property type="gene ID" value="b3739"/>
</dbReference>
<dbReference type="GeneID" id="75205457"/>
<dbReference type="GeneID" id="948251"/>
<dbReference type="KEGG" id="ecj:JW5611"/>
<dbReference type="KEGG" id="eco:b3739"/>
<dbReference type="KEGG" id="ecoc:C3026_20260"/>
<dbReference type="PATRIC" id="fig|1411691.4.peg.2961"/>
<dbReference type="EchoBASE" id="EB0104"/>
<dbReference type="eggNOG" id="COG3312">
    <property type="taxonomic scope" value="Bacteria"/>
</dbReference>
<dbReference type="HOGENOM" id="CLU_121415_2_0_6"/>
<dbReference type="InParanoid" id="P0ABC0"/>
<dbReference type="OMA" id="CAFMFSG"/>
<dbReference type="OrthoDB" id="6505199at2"/>
<dbReference type="PhylomeDB" id="P0ABC0"/>
<dbReference type="BioCyc" id="EcoCyc:EG10106-MONOMER"/>
<dbReference type="PRO" id="PR:P0ABC0"/>
<dbReference type="Proteomes" id="UP000000625">
    <property type="component" value="Chromosome"/>
</dbReference>
<dbReference type="GO" id="GO:0005886">
    <property type="term" value="C:plasma membrane"/>
    <property type="evidence" value="ECO:0000314"/>
    <property type="project" value="EcoCyc"/>
</dbReference>
<dbReference type="GO" id="GO:0045259">
    <property type="term" value="C:proton-transporting ATP synthase complex"/>
    <property type="evidence" value="ECO:0007669"/>
    <property type="project" value="UniProtKB-KW"/>
</dbReference>
<dbReference type="GO" id="GO:1902600">
    <property type="term" value="P:proton transmembrane transport"/>
    <property type="evidence" value="ECO:0007669"/>
    <property type="project" value="UniProtKB-KW"/>
</dbReference>
<dbReference type="InterPro" id="IPR005598">
    <property type="entry name" value="ATP_synth_I"/>
</dbReference>
<dbReference type="NCBIfam" id="NF005962">
    <property type="entry name" value="PRK08049.1"/>
    <property type="match status" value="1"/>
</dbReference>
<dbReference type="Pfam" id="PF03899">
    <property type="entry name" value="ATP-synt_I"/>
    <property type="match status" value="1"/>
</dbReference>
<proteinExistence type="evidence at protein level"/>
<gene>
    <name type="primary">atpI</name>
    <name type="synonym">uncI</name>
    <name type="ordered locus">b3739</name>
    <name type="ordered locus">JW5611</name>
</gene>
<keyword id="KW-0997">Cell inner membrane</keyword>
<keyword id="KW-1003">Cell membrane</keyword>
<keyword id="KW-0138">CF(0)</keyword>
<keyword id="KW-0903">Direct protein sequencing</keyword>
<keyword id="KW-0375">Hydrogen ion transport</keyword>
<keyword id="KW-0406">Ion transport</keyword>
<keyword id="KW-0472">Membrane</keyword>
<keyword id="KW-1185">Reference proteome</keyword>
<keyword id="KW-0812">Transmembrane</keyword>
<keyword id="KW-1133">Transmembrane helix</keyword>
<keyword id="KW-0813">Transport</keyword>
<organism>
    <name type="scientific">Escherichia coli (strain K12)</name>
    <dbReference type="NCBI Taxonomy" id="83333"/>
    <lineage>
        <taxon>Bacteria</taxon>
        <taxon>Pseudomonadati</taxon>
        <taxon>Pseudomonadota</taxon>
        <taxon>Gammaproteobacteria</taxon>
        <taxon>Enterobacterales</taxon>
        <taxon>Enterobacteriaceae</taxon>
        <taxon>Escherichia</taxon>
    </lineage>
</organism>
<feature type="initiator methionine" description="Removed" evidence="2">
    <location>
        <position position="1"/>
    </location>
</feature>
<feature type="chain" id="PRO_0000071706" description="ATP synthase protein I">
    <location>
        <begin position="2"/>
        <end position="126"/>
    </location>
</feature>
<feature type="topological domain" description="Cytoplasmic" evidence="1">
    <location>
        <begin position="2"/>
        <end position="14"/>
    </location>
</feature>
<feature type="transmembrane region" description="Helical" evidence="1">
    <location>
        <begin position="15"/>
        <end position="35"/>
    </location>
</feature>
<feature type="topological domain" description="Periplasmic" evidence="1">
    <location>
        <begin position="36"/>
        <end position="37"/>
    </location>
</feature>
<feature type="transmembrane region" description="Helical" evidence="1">
    <location>
        <begin position="38"/>
        <end position="58"/>
    </location>
</feature>
<feature type="topological domain" description="Cytoplasmic" evidence="1">
    <location>
        <begin position="59"/>
        <end position="70"/>
    </location>
</feature>
<feature type="transmembrane region" description="Helical" evidence="1">
    <location>
        <begin position="71"/>
        <end position="94"/>
    </location>
</feature>
<feature type="topological domain" description="Periplasmic" evidence="1">
    <location>
        <begin position="95"/>
        <end position="100"/>
    </location>
</feature>
<feature type="transmembrane region" description="Helical" evidence="1">
    <location>
        <begin position="101"/>
        <end position="117"/>
    </location>
</feature>
<feature type="topological domain" description="Cytoplasmic" evidence="1">
    <location>
        <begin position="118"/>
        <end position="126"/>
    </location>
</feature>
<feature type="sequence conflict" description="In Ref. 5; AAA83868." evidence="3" ref="5">
    <original>G</original>
    <variation>A</variation>
    <location>
        <position position="37"/>
    </location>
</feature>
<sequence length="126" mass="13632">MSVSLVSRNVARKLLLVQLLVVIASGLLFSLKDPFWGVSAISGGLAVFLPNVLFMIFAWRHQAHTPAKGRVAWTFAFGEAFKVLAMLVLLVVALAVLKAVFLPLIVTWVLVLVVQILAPAVINNKG</sequence>